<comment type="function">
    <text evidence="1">Specifically methylates the pseudouridine at position 1915 (m3Psi1915) in 23S rRNA.</text>
</comment>
<comment type="catalytic activity">
    <reaction evidence="1">
        <text>pseudouridine(1915) in 23S rRNA + S-adenosyl-L-methionine = N(3)-methylpseudouridine(1915) in 23S rRNA + S-adenosyl-L-homocysteine + H(+)</text>
        <dbReference type="Rhea" id="RHEA:42752"/>
        <dbReference type="Rhea" id="RHEA-COMP:10221"/>
        <dbReference type="Rhea" id="RHEA-COMP:10222"/>
        <dbReference type="ChEBI" id="CHEBI:15378"/>
        <dbReference type="ChEBI" id="CHEBI:57856"/>
        <dbReference type="ChEBI" id="CHEBI:59789"/>
        <dbReference type="ChEBI" id="CHEBI:65314"/>
        <dbReference type="ChEBI" id="CHEBI:74486"/>
        <dbReference type="EC" id="2.1.1.177"/>
    </reaction>
</comment>
<comment type="subunit">
    <text evidence="1">Homodimer.</text>
</comment>
<comment type="subcellular location">
    <subcellularLocation>
        <location evidence="1">Cytoplasm</location>
    </subcellularLocation>
</comment>
<comment type="similarity">
    <text evidence="1">Belongs to the RNA methyltransferase RlmH family.</text>
</comment>
<sequence length="160" mass="17656">MRVVVIAIGRLKQGPERELAERYRERFDDLGRKLGFRGPEIHEIGESRARDAPTRIAEEAAAIAALIPDKAVLVTLDERGDSLDSAGFARKLGGWRDQSTAQAIFVIGGADGLSPELRRKAKLSVSFGAATWPHQMVRVMLLEQLYRAATILSGHPYHRA</sequence>
<accession>Q21CZ7</accession>
<evidence type="ECO:0000255" key="1">
    <source>
        <dbReference type="HAMAP-Rule" id="MF_00658"/>
    </source>
</evidence>
<keyword id="KW-0963">Cytoplasm</keyword>
<keyword id="KW-0489">Methyltransferase</keyword>
<keyword id="KW-0698">rRNA processing</keyword>
<keyword id="KW-0949">S-adenosyl-L-methionine</keyword>
<keyword id="KW-0808">Transferase</keyword>
<gene>
    <name evidence="1" type="primary">rlmH</name>
    <name type="ordered locus">RPC_0164</name>
</gene>
<name>RLMH_RHOPB</name>
<dbReference type="EC" id="2.1.1.177" evidence="1"/>
<dbReference type="EMBL" id="CP000301">
    <property type="protein sequence ID" value="ABD85739.1"/>
    <property type="molecule type" value="Genomic_DNA"/>
</dbReference>
<dbReference type="SMR" id="Q21CZ7"/>
<dbReference type="STRING" id="316056.RPC_0164"/>
<dbReference type="KEGG" id="rpc:RPC_0164"/>
<dbReference type="eggNOG" id="COG1576">
    <property type="taxonomic scope" value="Bacteria"/>
</dbReference>
<dbReference type="HOGENOM" id="CLU_100552_1_1_5"/>
<dbReference type="OrthoDB" id="9806643at2"/>
<dbReference type="GO" id="GO:0005737">
    <property type="term" value="C:cytoplasm"/>
    <property type="evidence" value="ECO:0007669"/>
    <property type="project" value="UniProtKB-SubCell"/>
</dbReference>
<dbReference type="GO" id="GO:0070038">
    <property type="term" value="F:rRNA (pseudouridine-N3-)-methyltransferase activity"/>
    <property type="evidence" value="ECO:0007669"/>
    <property type="project" value="UniProtKB-UniRule"/>
</dbReference>
<dbReference type="CDD" id="cd18081">
    <property type="entry name" value="RlmH-like"/>
    <property type="match status" value="1"/>
</dbReference>
<dbReference type="Gene3D" id="3.40.1280.10">
    <property type="match status" value="1"/>
</dbReference>
<dbReference type="HAMAP" id="MF_00658">
    <property type="entry name" value="23SrRNA_methyltr_H"/>
    <property type="match status" value="1"/>
</dbReference>
<dbReference type="InterPro" id="IPR029028">
    <property type="entry name" value="Alpha/beta_knot_MTases"/>
</dbReference>
<dbReference type="InterPro" id="IPR003742">
    <property type="entry name" value="RlmH-like"/>
</dbReference>
<dbReference type="InterPro" id="IPR029026">
    <property type="entry name" value="tRNA_m1G_MTases_N"/>
</dbReference>
<dbReference type="NCBIfam" id="NF000989">
    <property type="entry name" value="PRK00103.2-3"/>
    <property type="match status" value="1"/>
</dbReference>
<dbReference type="NCBIfam" id="NF000991">
    <property type="entry name" value="PRK00103.2-5"/>
    <property type="match status" value="1"/>
</dbReference>
<dbReference type="PANTHER" id="PTHR33603">
    <property type="entry name" value="METHYLTRANSFERASE"/>
    <property type="match status" value="1"/>
</dbReference>
<dbReference type="PANTHER" id="PTHR33603:SF1">
    <property type="entry name" value="RIBOSOMAL RNA LARGE SUBUNIT METHYLTRANSFERASE H"/>
    <property type="match status" value="1"/>
</dbReference>
<dbReference type="Pfam" id="PF02590">
    <property type="entry name" value="SPOUT_MTase"/>
    <property type="match status" value="1"/>
</dbReference>
<dbReference type="PIRSF" id="PIRSF004505">
    <property type="entry name" value="MT_bac"/>
    <property type="match status" value="1"/>
</dbReference>
<dbReference type="SUPFAM" id="SSF75217">
    <property type="entry name" value="alpha/beta knot"/>
    <property type="match status" value="1"/>
</dbReference>
<protein>
    <recommendedName>
        <fullName evidence="1">Ribosomal RNA large subunit methyltransferase H</fullName>
        <ecNumber evidence="1">2.1.1.177</ecNumber>
    </recommendedName>
    <alternativeName>
        <fullName evidence="1">23S rRNA (pseudouridine1915-N3)-methyltransferase</fullName>
    </alternativeName>
    <alternativeName>
        <fullName evidence="1">23S rRNA m3Psi1915 methyltransferase</fullName>
    </alternativeName>
    <alternativeName>
        <fullName evidence="1">rRNA (pseudouridine-N3-)-methyltransferase RlmH</fullName>
    </alternativeName>
</protein>
<proteinExistence type="inferred from homology"/>
<feature type="chain" id="PRO_0000260597" description="Ribosomal RNA large subunit methyltransferase H">
    <location>
        <begin position="1"/>
        <end position="160"/>
    </location>
</feature>
<feature type="binding site" evidence="1">
    <location>
        <position position="76"/>
    </location>
    <ligand>
        <name>S-adenosyl-L-methionine</name>
        <dbReference type="ChEBI" id="CHEBI:59789"/>
    </ligand>
</feature>
<feature type="binding site" evidence="1">
    <location>
        <position position="108"/>
    </location>
    <ligand>
        <name>S-adenosyl-L-methionine</name>
        <dbReference type="ChEBI" id="CHEBI:59789"/>
    </ligand>
</feature>
<organism>
    <name type="scientific">Rhodopseudomonas palustris (strain BisB18)</name>
    <dbReference type="NCBI Taxonomy" id="316056"/>
    <lineage>
        <taxon>Bacteria</taxon>
        <taxon>Pseudomonadati</taxon>
        <taxon>Pseudomonadota</taxon>
        <taxon>Alphaproteobacteria</taxon>
        <taxon>Hyphomicrobiales</taxon>
        <taxon>Nitrobacteraceae</taxon>
        <taxon>Rhodopseudomonas</taxon>
    </lineage>
</organism>
<reference key="1">
    <citation type="submission" date="2006-03" db="EMBL/GenBank/DDBJ databases">
        <title>Complete sequence of Rhodopseudomonas palustris BisB18.</title>
        <authorList>
            <consortium name="US DOE Joint Genome Institute"/>
            <person name="Copeland A."/>
            <person name="Lucas S."/>
            <person name="Lapidus A."/>
            <person name="Barry K."/>
            <person name="Detter J.C."/>
            <person name="Glavina del Rio T."/>
            <person name="Hammon N."/>
            <person name="Israni S."/>
            <person name="Dalin E."/>
            <person name="Tice H."/>
            <person name="Pitluck S."/>
            <person name="Chain P."/>
            <person name="Malfatti S."/>
            <person name="Shin M."/>
            <person name="Vergez L."/>
            <person name="Schmutz J."/>
            <person name="Larimer F."/>
            <person name="Land M."/>
            <person name="Hauser L."/>
            <person name="Pelletier D.A."/>
            <person name="Kyrpides N."/>
            <person name="Anderson I."/>
            <person name="Oda Y."/>
            <person name="Harwood C.S."/>
            <person name="Richardson P."/>
        </authorList>
    </citation>
    <scope>NUCLEOTIDE SEQUENCE [LARGE SCALE GENOMIC DNA]</scope>
    <source>
        <strain>BisB18</strain>
    </source>
</reference>